<protein>
    <recommendedName>
        <fullName>Arabinose 5-phosphate isomerase KdsD</fullName>
        <shortName>API</shortName>
        <shortName>L-API</shortName>
        <ecNumber>5.3.1.13</ecNumber>
    </recommendedName>
</protein>
<accession>Q8ZLS1</accession>
<reference key="1">
    <citation type="journal article" date="2001" name="Nature">
        <title>Complete genome sequence of Salmonella enterica serovar Typhimurium LT2.</title>
        <authorList>
            <person name="McClelland M."/>
            <person name="Sanderson K.E."/>
            <person name="Spieth J."/>
            <person name="Clifton S.W."/>
            <person name="Latreille P."/>
            <person name="Courtney L."/>
            <person name="Porwollik S."/>
            <person name="Ali J."/>
            <person name="Dante M."/>
            <person name="Du F."/>
            <person name="Hou S."/>
            <person name="Layman D."/>
            <person name="Leonard S."/>
            <person name="Nguyen C."/>
            <person name="Scott K."/>
            <person name="Holmes A."/>
            <person name="Grewal N."/>
            <person name="Mulvaney E."/>
            <person name="Ryan E."/>
            <person name="Sun H."/>
            <person name="Florea L."/>
            <person name="Miller W."/>
            <person name="Stoneking T."/>
            <person name="Nhan M."/>
            <person name="Waterston R."/>
            <person name="Wilson R.K."/>
        </authorList>
    </citation>
    <scope>NUCLEOTIDE SEQUENCE [LARGE SCALE GENOMIC DNA]</scope>
    <source>
        <strain>LT2 / SGSC1412 / ATCC 700720</strain>
    </source>
</reference>
<dbReference type="EC" id="5.3.1.13"/>
<dbReference type="EMBL" id="AE006468">
    <property type="protein sequence ID" value="AAL22184.1"/>
    <property type="molecule type" value="Genomic_DNA"/>
</dbReference>
<dbReference type="RefSeq" id="WP_000018617.1">
    <property type="nucleotide sequence ID" value="NC_003197.2"/>
</dbReference>
<dbReference type="SMR" id="Q8ZLS1"/>
<dbReference type="STRING" id="99287.STM3315"/>
<dbReference type="BindingDB" id="Q8ZLS1"/>
<dbReference type="ChEMBL" id="CHEMBL3110"/>
<dbReference type="PaxDb" id="99287-STM3315"/>
<dbReference type="DNASU" id="1254838"/>
<dbReference type="KEGG" id="stm:STM3315"/>
<dbReference type="PATRIC" id="fig|99287.12.peg.3516"/>
<dbReference type="HOGENOM" id="CLU_040681_13_1_6"/>
<dbReference type="OMA" id="LMACLMR"/>
<dbReference type="PhylomeDB" id="Q8ZLS1"/>
<dbReference type="BioCyc" id="SENT99287:STM3315-MONOMER"/>
<dbReference type="UniPathway" id="UPA00030"/>
<dbReference type="UniPathway" id="UPA00357">
    <property type="reaction ID" value="UER00473"/>
</dbReference>
<dbReference type="Proteomes" id="UP000001014">
    <property type="component" value="Chromosome"/>
</dbReference>
<dbReference type="GO" id="GO:0019146">
    <property type="term" value="F:arabinose-5-phosphate isomerase activity"/>
    <property type="evidence" value="ECO:0007669"/>
    <property type="project" value="UniProtKB-EC"/>
</dbReference>
<dbReference type="GO" id="GO:0097367">
    <property type="term" value="F:carbohydrate derivative binding"/>
    <property type="evidence" value="ECO:0007669"/>
    <property type="project" value="InterPro"/>
</dbReference>
<dbReference type="GO" id="GO:0046872">
    <property type="term" value="F:metal ion binding"/>
    <property type="evidence" value="ECO:0007669"/>
    <property type="project" value="UniProtKB-KW"/>
</dbReference>
<dbReference type="GO" id="GO:0009103">
    <property type="term" value="P:lipopolysaccharide biosynthetic process"/>
    <property type="evidence" value="ECO:0007669"/>
    <property type="project" value="UniProtKB-UniPathway"/>
</dbReference>
<dbReference type="CDD" id="cd04604">
    <property type="entry name" value="CBS_pair_SIS_assoc"/>
    <property type="match status" value="1"/>
</dbReference>
<dbReference type="CDD" id="cd05014">
    <property type="entry name" value="SIS_Kpsf"/>
    <property type="match status" value="1"/>
</dbReference>
<dbReference type="FunFam" id="3.10.580.10:FF:000007">
    <property type="entry name" value="Arabinose 5-phosphate isomerase"/>
    <property type="match status" value="1"/>
</dbReference>
<dbReference type="FunFam" id="3.40.50.10490:FF:000011">
    <property type="entry name" value="Arabinose 5-phosphate isomerase"/>
    <property type="match status" value="1"/>
</dbReference>
<dbReference type="Gene3D" id="3.10.580.10">
    <property type="entry name" value="CBS-domain"/>
    <property type="match status" value="1"/>
</dbReference>
<dbReference type="Gene3D" id="3.40.50.10490">
    <property type="entry name" value="Glucose-6-phosphate isomerase like protein, domain 1"/>
    <property type="match status" value="1"/>
</dbReference>
<dbReference type="InterPro" id="IPR000644">
    <property type="entry name" value="CBS_dom"/>
</dbReference>
<dbReference type="InterPro" id="IPR046342">
    <property type="entry name" value="CBS_dom_sf"/>
</dbReference>
<dbReference type="InterPro" id="IPR050986">
    <property type="entry name" value="GutQ/KpsF_isomerases"/>
</dbReference>
<dbReference type="InterPro" id="IPR004800">
    <property type="entry name" value="KdsD/KpsF-type"/>
</dbReference>
<dbReference type="InterPro" id="IPR001347">
    <property type="entry name" value="SIS_dom"/>
</dbReference>
<dbReference type="InterPro" id="IPR046348">
    <property type="entry name" value="SIS_dom_sf"/>
</dbReference>
<dbReference type="InterPro" id="IPR035474">
    <property type="entry name" value="SIS_Kpsf"/>
</dbReference>
<dbReference type="NCBIfam" id="TIGR00393">
    <property type="entry name" value="kpsF"/>
    <property type="match status" value="1"/>
</dbReference>
<dbReference type="NCBIfam" id="NF008141">
    <property type="entry name" value="PRK10892.1"/>
    <property type="match status" value="1"/>
</dbReference>
<dbReference type="PANTHER" id="PTHR42745">
    <property type="match status" value="1"/>
</dbReference>
<dbReference type="PANTHER" id="PTHR42745:SF1">
    <property type="entry name" value="ARABINOSE 5-PHOSPHATE ISOMERASE KDSD"/>
    <property type="match status" value="1"/>
</dbReference>
<dbReference type="Pfam" id="PF00571">
    <property type="entry name" value="CBS"/>
    <property type="match status" value="2"/>
</dbReference>
<dbReference type="Pfam" id="PF01380">
    <property type="entry name" value="SIS"/>
    <property type="match status" value="1"/>
</dbReference>
<dbReference type="PIRSF" id="PIRSF004692">
    <property type="entry name" value="KdsD_KpsF"/>
    <property type="match status" value="1"/>
</dbReference>
<dbReference type="SUPFAM" id="SSF53697">
    <property type="entry name" value="SIS domain"/>
    <property type="match status" value="1"/>
</dbReference>
<dbReference type="PROSITE" id="PS51371">
    <property type="entry name" value="CBS"/>
    <property type="match status" value="2"/>
</dbReference>
<dbReference type="PROSITE" id="PS51464">
    <property type="entry name" value="SIS"/>
    <property type="match status" value="1"/>
</dbReference>
<feature type="chain" id="PRO_0000136579" description="Arabinose 5-phosphate isomerase KdsD">
    <location>
        <begin position="1"/>
        <end position="328"/>
    </location>
</feature>
<feature type="domain" description="SIS" evidence="3">
    <location>
        <begin position="41"/>
        <end position="184"/>
    </location>
</feature>
<feature type="domain" description="CBS 1" evidence="2">
    <location>
        <begin position="210"/>
        <end position="268"/>
    </location>
</feature>
<feature type="domain" description="CBS 2" evidence="2">
    <location>
        <begin position="277"/>
        <end position="328"/>
    </location>
</feature>
<feature type="binding site" evidence="1">
    <location>
        <begin position="75"/>
        <end position="76"/>
    </location>
    <ligand>
        <name>substrate</name>
    </ligand>
</feature>
<feature type="binding site" evidence="1">
    <location>
        <position position="82"/>
    </location>
    <ligand>
        <name>substrate</name>
    </ligand>
</feature>
<feature type="binding site" evidence="1">
    <location>
        <position position="82"/>
    </location>
    <ligand>
        <name>Zn(2+)</name>
        <dbReference type="ChEBI" id="CHEBI:29105"/>
    </ligand>
</feature>
<feature type="binding site" evidence="1">
    <location>
        <position position="88"/>
    </location>
    <ligand>
        <name>substrate</name>
    </ligand>
</feature>
<feature type="binding site" evidence="1">
    <location>
        <begin position="114"/>
        <end position="123"/>
    </location>
    <ligand>
        <name>substrate</name>
    </ligand>
</feature>
<feature type="binding site" evidence="1">
    <location>
        <begin position="148"/>
        <end position="150"/>
    </location>
    <ligand>
        <name>substrate</name>
    </ligand>
</feature>
<feature type="binding site" evidence="1">
    <location>
        <position position="275"/>
    </location>
    <ligand>
        <name>substrate</name>
    </ligand>
</feature>
<feature type="site" description="Catalytically relevant" evidence="1">
    <location>
        <position position="59"/>
    </location>
</feature>
<feature type="site" description="Catalytically relevant" evidence="1">
    <location>
        <position position="111"/>
    </location>
</feature>
<feature type="site" description="Catalytically relevant" evidence="1">
    <location>
        <position position="152"/>
    </location>
</feature>
<feature type="site" description="Catalytically relevant" evidence="1">
    <location>
        <position position="193"/>
    </location>
</feature>
<name>KDSD_SALTY</name>
<organism>
    <name type="scientific">Salmonella typhimurium (strain LT2 / SGSC1412 / ATCC 700720)</name>
    <dbReference type="NCBI Taxonomy" id="99287"/>
    <lineage>
        <taxon>Bacteria</taxon>
        <taxon>Pseudomonadati</taxon>
        <taxon>Pseudomonadota</taxon>
        <taxon>Gammaproteobacteria</taxon>
        <taxon>Enterobacterales</taxon>
        <taxon>Enterobacteriaceae</taxon>
        <taxon>Salmonella</taxon>
    </lineage>
</organism>
<comment type="function">
    <text evidence="1">Involved in the biosynthesis of 3-deoxy-D-manno-octulosonate (KDO), a unique 8-carbon sugar component of lipopolysaccharides (LPSs). Catalyzes the reversible aldol-ketol isomerization between D-ribulose 5-phosphate (Ru5P) and D-arabinose 5-phosphate (A5P) (By similarity).</text>
</comment>
<comment type="catalytic activity">
    <reaction>
        <text>D-arabinose 5-phosphate = D-ribulose 5-phosphate</text>
        <dbReference type="Rhea" id="RHEA:23104"/>
        <dbReference type="ChEBI" id="CHEBI:57693"/>
        <dbReference type="ChEBI" id="CHEBI:58121"/>
        <dbReference type="EC" id="5.3.1.13"/>
    </reaction>
</comment>
<comment type="pathway">
    <text>Carbohydrate biosynthesis; 3-deoxy-D-manno-octulosonate biosynthesis; 3-deoxy-D-manno-octulosonate from D-ribulose 5-phosphate: step 1/3.</text>
</comment>
<comment type="pathway">
    <text>Bacterial outer membrane biogenesis; lipopolysaccharide biosynthesis.</text>
</comment>
<comment type="subunit">
    <text evidence="1">Homotetramer.</text>
</comment>
<comment type="similarity">
    <text evidence="4">Belongs to the SIS family. GutQ/KpsF subfamily.</text>
</comment>
<evidence type="ECO:0000250" key="1"/>
<evidence type="ECO:0000255" key="2">
    <source>
        <dbReference type="PROSITE-ProRule" id="PRU00703"/>
    </source>
</evidence>
<evidence type="ECO:0000255" key="3">
    <source>
        <dbReference type="PROSITE-ProRule" id="PRU00797"/>
    </source>
</evidence>
<evidence type="ECO:0000305" key="4"/>
<sequence length="328" mass="35000">MSHLALQPGFDFQQAGKEVLEIEREGLAELDQYINQHFTLACEKMFNCTGKVVVMGMGKSGHIGRKMAATFASTGTSSFFVHPGEAAHGDLGMVTPQDVVIAISNSGESSEIAALIPVLKRLHVPLICITGRPESSMARAADVHLCVKVPKEACPLGLAPTSSTTATLVMGDALAVALLKARGFTAEDFALSHPGGALGRKLLLRVSDIMHTGDEIPHVNKHATLRDALLEITRKNLGMTVICDESMKIDGIFTDGDLRRVFDMGGDMRQLGIAEVMTPGGIRVRPGILAVDALNLMQSRHITSVLVADGDQLLGVLHMHDLLRAGVV</sequence>
<gene>
    <name type="primary">kdsD</name>
    <name type="ordered locus">STM3315</name>
</gene>
<proteinExistence type="inferred from homology"/>
<keyword id="KW-0119">Carbohydrate metabolism</keyword>
<keyword id="KW-0129">CBS domain</keyword>
<keyword id="KW-0413">Isomerase</keyword>
<keyword id="KW-0448">Lipopolysaccharide biosynthesis</keyword>
<keyword id="KW-0479">Metal-binding</keyword>
<keyword id="KW-1185">Reference proteome</keyword>
<keyword id="KW-0677">Repeat</keyword>
<keyword id="KW-0862">Zinc</keyword>